<proteinExistence type="inferred from homology"/>
<protein>
    <recommendedName>
        <fullName evidence="1">Elongation factor 4</fullName>
        <shortName evidence="1">EF-4</shortName>
        <ecNumber evidence="1">3.6.5.n1</ecNumber>
    </recommendedName>
    <alternativeName>
        <fullName evidence="1">Ribosomal back-translocase LepA</fullName>
    </alternativeName>
</protein>
<organism>
    <name type="scientific">Pelodictyon phaeoclathratiforme (strain DSM 5477 / BU-1)</name>
    <dbReference type="NCBI Taxonomy" id="324925"/>
    <lineage>
        <taxon>Bacteria</taxon>
        <taxon>Pseudomonadati</taxon>
        <taxon>Chlorobiota</taxon>
        <taxon>Chlorobiia</taxon>
        <taxon>Chlorobiales</taxon>
        <taxon>Chlorobiaceae</taxon>
        <taxon>Chlorobium/Pelodictyon group</taxon>
        <taxon>Pelodictyon</taxon>
    </lineage>
</organism>
<evidence type="ECO:0000255" key="1">
    <source>
        <dbReference type="HAMAP-Rule" id="MF_00071"/>
    </source>
</evidence>
<sequence>MALSSTEVNRIRNFCIIAHIDHGKSTLADRLLEITHTLDRTQMASAQVLDDMDLERERGITIKSHAIQMKYRASDGLEYTLNLIDTPGHVDFSYEVSRSLAACEGALLIVDATQGVEAQTIANLYLALDAGLDIIPVINKIDLPSSDVEGVARQVMDLIGIKREEILQVSAKAGIGVPELIEAIVQRIPAPADNNHLPLRALIFDSVFDSYRGAVIYLRIVEGSLKKGDRVKFFASNKIFFAEEIGTMSMKRQPKSLLESGDVGYLICSIKDVKDAKVGDTVTLADNPAHERLSGYKEVKPMVFSGLYPINSNEFEDLRESLEKLALNDASLLYTPETSVALGFGFRCGFLGLLHMEIIQERLEREYGVNIITTVPNVEYRVVMTNGEVVIVDNPSKMPDTGRINLVEEPYVTMQIITLADYIGNIMKLGMERRGEYKNTDYLDTTRVIMHFEFPLAEIVFDFHDRLKSISKGYASMDYEYIGYRDSDLVKLDVLLNGETVDALSIVVHRSKAYDWGKKLCLKLKGIIPKQMYEVAIQAAIGSKVISRETISAMRKNVLAKCYGGDISRKRKLLEKQKEGKKRMKQVGRVEVPQEAFLALLNIDE</sequence>
<name>LEPA_PELPB</name>
<gene>
    <name evidence="1" type="primary">lepA</name>
    <name type="ordered locus">Ppha_1786</name>
</gene>
<reference key="1">
    <citation type="submission" date="2008-06" db="EMBL/GenBank/DDBJ databases">
        <title>Complete sequence of Pelodictyon phaeoclathratiforme BU-1.</title>
        <authorList>
            <consortium name="US DOE Joint Genome Institute"/>
            <person name="Lucas S."/>
            <person name="Copeland A."/>
            <person name="Lapidus A."/>
            <person name="Glavina del Rio T."/>
            <person name="Dalin E."/>
            <person name="Tice H."/>
            <person name="Bruce D."/>
            <person name="Goodwin L."/>
            <person name="Pitluck S."/>
            <person name="Schmutz J."/>
            <person name="Larimer F."/>
            <person name="Land M."/>
            <person name="Hauser L."/>
            <person name="Kyrpides N."/>
            <person name="Mikhailova N."/>
            <person name="Liu Z."/>
            <person name="Li T."/>
            <person name="Zhao F."/>
            <person name="Overmann J."/>
            <person name="Bryant D.A."/>
            <person name="Richardson P."/>
        </authorList>
    </citation>
    <scope>NUCLEOTIDE SEQUENCE [LARGE SCALE GENOMIC DNA]</scope>
    <source>
        <strain>DSM 5477 / BU-1</strain>
    </source>
</reference>
<accession>B4SBG4</accession>
<feature type="chain" id="PRO_1000092423" description="Elongation factor 4">
    <location>
        <begin position="1"/>
        <end position="605"/>
    </location>
</feature>
<feature type="domain" description="tr-type G">
    <location>
        <begin position="9"/>
        <end position="192"/>
    </location>
</feature>
<feature type="binding site" evidence="1">
    <location>
        <begin position="21"/>
        <end position="26"/>
    </location>
    <ligand>
        <name>GTP</name>
        <dbReference type="ChEBI" id="CHEBI:37565"/>
    </ligand>
</feature>
<feature type="binding site" evidence="1">
    <location>
        <begin position="139"/>
        <end position="142"/>
    </location>
    <ligand>
        <name>GTP</name>
        <dbReference type="ChEBI" id="CHEBI:37565"/>
    </ligand>
</feature>
<dbReference type="EC" id="3.6.5.n1" evidence="1"/>
<dbReference type="EMBL" id="CP001110">
    <property type="protein sequence ID" value="ACF44018.1"/>
    <property type="molecule type" value="Genomic_DNA"/>
</dbReference>
<dbReference type="RefSeq" id="WP_012508505.1">
    <property type="nucleotide sequence ID" value="NC_011060.1"/>
</dbReference>
<dbReference type="SMR" id="B4SBG4"/>
<dbReference type="STRING" id="324925.Ppha_1786"/>
<dbReference type="KEGG" id="pph:Ppha_1786"/>
<dbReference type="eggNOG" id="COG0481">
    <property type="taxonomic scope" value="Bacteria"/>
</dbReference>
<dbReference type="HOGENOM" id="CLU_009995_3_3_10"/>
<dbReference type="OrthoDB" id="9801591at2"/>
<dbReference type="Proteomes" id="UP000002724">
    <property type="component" value="Chromosome"/>
</dbReference>
<dbReference type="GO" id="GO:0005886">
    <property type="term" value="C:plasma membrane"/>
    <property type="evidence" value="ECO:0007669"/>
    <property type="project" value="UniProtKB-SubCell"/>
</dbReference>
<dbReference type="GO" id="GO:0005525">
    <property type="term" value="F:GTP binding"/>
    <property type="evidence" value="ECO:0007669"/>
    <property type="project" value="UniProtKB-UniRule"/>
</dbReference>
<dbReference type="GO" id="GO:0003924">
    <property type="term" value="F:GTPase activity"/>
    <property type="evidence" value="ECO:0007669"/>
    <property type="project" value="UniProtKB-UniRule"/>
</dbReference>
<dbReference type="GO" id="GO:0043022">
    <property type="term" value="F:ribosome binding"/>
    <property type="evidence" value="ECO:0007669"/>
    <property type="project" value="UniProtKB-UniRule"/>
</dbReference>
<dbReference type="GO" id="GO:0003746">
    <property type="term" value="F:translation elongation factor activity"/>
    <property type="evidence" value="ECO:0007669"/>
    <property type="project" value="UniProtKB-UniRule"/>
</dbReference>
<dbReference type="GO" id="GO:0045727">
    <property type="term" value="P:positive regulation of translation"/>
    <property type="evidence" value="ECO:0007669"/>
    <property type="project" value="UniProtKB-UniRule"/>
</dbReference>
<dbReference type="CDD" id="cd03699">
    <property type="entry name" value="EF4_II"/>
    <property type="match status" value="1"/>
</dbReference>
<dbReference type="CDD" id="cd16260">
    <property type="entry name" value="EF4_III"/>
    <property type="match status" value="1"/>
</dbReference>
<dbReference type="CDD" id="cd01890">
    <property type="entry name" value="LepA"/>
    <property type="match status" value="1"/>
</dbReference>
<dbReference type="CDD" id="cd03709">
    <property type="entry name" value="lepA_C"/>
    <property type="match status" value="1"/>
</dbReference>
<dbReference type="FunFam" id="3.40.50.300:FF:000078">
    <property type="entry name" value="Elongation factor 4"/>
    <property type="match status" value="1"/>
</dbReference>
<dbReference type="FunFam" id="2.40.30.10:FF:000015">
    <property type="entry name" value="Translation factor GUF1, mitochondrial"/>
    <property type="match status" value="1"/>
</dbReference>
<dbReference type="FunFam" id="3.30.70.240:FF:000007">
    <property type="entry name" value="Translation factor GUF1, mitochondrial"/>
    <property type="match status" value="1"/>
</dbReference>
<dbReference type="FunFam" id="3.30.70.2570:FF:000001">
    <property type="entry name" value="Translation factor GUF1, mitochondrial"/>
    <property type="match status" value="1"/>
</dbReference>
<dbReference type="FunFam" id="3.30.70.870:FF:000004">
    <property type="entry name" value="Translation factor GUF1, mitochondrial"/>
    <property type="match status" value="1"/>
</dbReference>
<dbReference type="Gene3D" id="3.30.70.240">
    <property type="match status" value="1"/>
</dbReference>
<dbReference type="Gene3D" id="3.30.70.2570">
    <property type="entry name" value="Elongation factor 4, C-terminal domain"/>
    <property type="match status" value="1"/>
</dbReference>
<dbReference type="Gene3D" id="3.30.70.870">
    <property type="entry name" value="Elongation Factor G (Translational Gtpase), domain 3"/>
    <property type="match status" value="1"/>
</dbReference>
<dbReference type="Gene3D" id="3.40.50.300">
    <property type="entry name" value="P-loop containing nucleotide triphosphate hydrolases"/>
    <property type="match status" value="1"/>
</dbReference>
<dbReference type="Gene3D" id="2.40.30.10">
    <property type="entry name" value="Translation factors"/>
    <property type="match status" value="1"/>
</dbReference>
<dbReference type="HAMAP" id="MF_00071">
    <property type="entry name" value="LepA"/>
    <property type="match status" value="1"/>
</dbReference>
<dbReference type="InterPro" id="IPR006297">
    <property type="entry name" value="EF-4"/>
</dbReference>
<dbReference type="InterPro" id="IPR035647">
    <property type="entry name" value="EFG_III/V"/>
</dbReference>
<dbReference type="InterPro" id="IPR000640">
    <property type="entry name" value="EFG_V-like"/>
</dbReference>
<dbReference type="InterPro" id="IPR004161">
    <property type="entry name" value="EFTu-like_2"/>
</dbReference>
<dbReference type="InterPro" id="IPR038363">
    <property type="entry name" value="LepA_C_sf"/>
</dbReference>
<dbReference type="InterPro" id="IPR013842">
    <property type="entry name" value="LepA_CTD"/>
</dbReference>
<dbReference type="InterPro" id="IPR035654">
    <property type="entry name" value="LepA_IV"/>
</dbReference>
<dbReference type="InterPro" id="IPR027417">
    <property type="entry name" value="P-loop_NTPase"/>
</dbReference>
<dbReference type="InterPro" id="IPR005225">
    <property type="entry name" value="Small_GTP-bd"/>
</dbReference>
<dbReference type="InterPro" id="IPR000795">
    <property type="entry name" value="T_Tr_GTP-bd_dom"/>
</dbReference>
<dbReference type="NCBIfam" id="TIGR01393">
    <property type="entry name" value="lepA"/>
    <property type="match status" value="1"/>
</dbReference>
<dbReference type="NCBIfam" id="TIGR00231">
    <property type="entry name" value="small_GTP"/>
    <property type="match status" value="1"/>
</dbReference>
<dbReference type="PANTHER" id="PTHR43512:SF4">
    <property type="entry name" value="TRANSLATION FACTOR GUF1 HOMOLOG, CHLOROPLASTIC"/>
    <property type="match status" value="1"/>
</dbReference>
<dbReference type="PANTHER" id="PTHR43512">
    <property type="entry name" value="TRANSLATION FACTOR GUF1-RELATED"/>
    <property type="match status" value="1"/>
</dbReference>
<dbReference type="Pfam" id="PF00679">
    <property type="entry name" value="EFG_C"/>
    <property type="match status" value="1"/>
</dbReference>
<dbReference type="Pfam" id="PF00009">
    <property type="entry name" value="GTP_EFTU"/>
    <property type="match status" value="1"/>
</dbReference>
<dbReference type="Pfam" id="PF03144">
    <property type="entry name" value="GTP_EFTU_D2"/>
    <property type="match status" value="1"/>
</dbReference>
<dbReference type="Pfam" id="PF06421">
    <property type="entry name" value="LepA_C"/>
    <property type="match status" value="1"/>
</dbReference>
<dbReference type="PRINTS" id="PR00315">
    <property type="entry name" value="ELONGATNFCT"/>
</dbReference>
<dbReference type="SUPFAM" id="SSF54980">
    <property type="entry name" value="EF-G C-terminal domain-like"/>
    <property type="match status" value="2"/>
</dbReference>
<dbReference type="SUPFAM" id="SSF52540">
    <property type="entry name" value="P-loop containing nucleoside triphosphate hydrolases"/>
    <property type="match status" value="1"/>
</dbReference>
<dbReference type="PROSITE" id="PS51722">
    <property type="entry name" value="G_TR_2"/>
    <property type="match status" value="1"/>
</dbReference>
<comment type="function">
    <text evidence="1">Required for accurate and efficient protein synthesis under certain stress conditions. May act as a fidelity factor of the translation reaction, by catalyzing a one-codon backward translocation of tRNAs on improperly translocated ribosomes. Back-translocation proceeds from a post-translocation (POST) complex to a pre-translocation (PRE) complex, thus giving elongation factor G a second chance to translocate the tRNAs correctly. Binds to ribosomes in a GTP-dependent manner.</text>
</comment>
<comment type="catalytic activity">
    <reaction evidence="1">
        <text>GTP + H2O = GDP + phosphate + H(+)</text>
        <dbReference type="Rhea" id="RHEA:19669"/>
        <dbReference type="ChEBI" id="CHEBI:15377"/>
        <dbReference type="ChEBI" id="CHEBI:15378"/>
        <dbReference type="ChEBI" id="CHEBI:37565"/>
        <dbReference type="ChEBI" id="CHEBI:43474"/>
        <dbReference type="ChEBI" id="CHEBI:58189"/>
        <dbReference type="EC" id="3.6.5.n1"/>
    </reaction>
</comment>
<comment type="subcellular location">
    <subcellularLocation>
        <location evidence="1">Cell inner membrane</location>
        <topology evidence="1">Peripheral membrane protein</topology>
        <orientation evidence="1">Cytoplasmic side</orientation>
    </subcellularLocation>
</comment>
<comment type="similarity">
    <text evidence="1">Belongs to the TRAFAC class translation factor GTPase superfamily. Classic translation factor GTPase family. LepA subfamily.</text>
</comment>
<keyword id="KW-0997">Cell inner membrane</keyword>
<keyword id="KW-1003">Cell membrane</keyword>
<keyword id="KW-0342">GTP-binding</keyword>
<keyword id="KW-0378">Hydrolase</keyword>
<keyword id="KW-0472">Membrane</keyword>
<keyword id="KW-0547">Nucleotide-binding</keyword>
<keyword id="KW-0648">Protein biosynthesis</keyword>
<keyword id="KW-1185">Reference proteome</keyword>